<protein>
    <recommendedName>
        <fullName evidence="4">Non-secreted LysM effector LysM19</fullName>
    </recommendedName>
    <alternativeName>
        <fullName evidence="4">LysM domain-containing protein 19</fullName>
    </alternativeName>
</protein>
<keyword id="KW-0147">Chitin-binding</keyword>
<keyword id="KW-0456">Lyase</keyword>
<keyword id="KW-1185">Reference proteome</keyword>
<keyword id="KW-0677">Repeat</keyword>
<keyword id="KW-0843">Virulence</keyword>
<sequence>MRALLASQGICNFHNILSVELVRQAVPVFGYMYFPPTSEKVYGVGNDAILGNHHGHAHLHHHFHRGGNNNPTPIEISVGATSTRIEYSGTPVAVNDSAELVSQALGKLAVINKERYENITYNRYEFADAHQIVGQKINAPPLNYGSNVTQSLPNISSHEKRDDHEGNSTRRLVYSISPELAQAARILAESQPPTPSTGEEADLAMNVRMKYFAESNDTNTPQQAHRHSDGLSEYAVTWADEMPLANRTTVENDGKLLKRASSSDYWMANLEQRGASPYAPTGYKVFRNVKDYGAKGDGVTDDTAAINTAIADGNRCGADCSSSTVYPAVVFFPRGSYLVSSPIIQYYNTQFLGDPGDYPTILAAASFVGLGVITSDVYVGDQDEWYINTNNFLRSVRNFKMDITRTDPNAYVCAIHWQVAQGTSLENIDFYMSRAAGNTQQGIYMENGSGGFMANLTFVGGNFGAYLGNQQFTTSQLVFVQCKTAMQVHWDWAWTMQDVVIESCGTGILLTGGAGGSFSTGQGVGSLILVDAIIANTPTGIMTSLYGQNSTEFLLQNVGFFNVQKAIIAERFSDPILAGGNEVLIDAWGFGLYGNASGVFFAQENDLPVMKRPEALVGSNKYVKPNLFTRRRPQYYDLGGSQVIDVKAYGAKGDGVTDDTDALNSVLSTAANLSSIVFIPYGVYIIKDTLKVPEGSRIMGQAWSQIMATGAKFEDIEKPHVAVKIGDHGDEGIVEIQELLFTVSGPTAGAILVEWNIHESTQGSAGLWDSHFRVGGAKGSMLQAKDCPKRASTLNKNCIAASMLMHITQGASAYIWRDSWYREPTDIVGQRNFTGYYLYSKSRNNALLNRLSNTCQTAMTRLINCPDETYAFLGRGWPQSYTNKTIASMVCSRGCKDSIQSWYEEVTTHCKEFDTKEDVMNFRGGILWAGWNQTCLQSPQGGEYCSDVIAGFSPVKHAEEMLDSELCSYCYTTVLQMAQQSPYSFYDQSYQRLLNLTQERCGLTGATDIAKPVEDRSDDPNDFCASDIVYTTIQGDTCDSIAVTHTISSAALFIGSPEIIDCTDIRPGLSICLPFSCDNVYTYPANATCATIEDSFGMDSGVIRRLNPWIDGGCTNLQEWSVNYGHVLCVSPQAGTHTHMAPPPGVTSLPGSDTGFTDQDIAPPANSTVANGTTMSCGRWHVARDQDTCTAICVQGGIEFSLFLAVNPSLSADSCTTELQMGAAYCTGPTQGWGLVRPNSTTPRSSVVATNTALDLGI</sequence>
<proteinExistence type="inferred from homology"/>
<organism>
    <name type="scientific">Penicillium expansum</name>
    <name type="common">Blue mold rot fungus</name>
    <dbReference type="NCBI Taxonomy" id="27334"/>
    <lineage>
        <taxon>Eukaryota</taxon>
        <taxon>Fungi</taxon>
        <taxon>Dikarya</taxon>
        <taxon>Ascomycota</taxon>
        <taxon>Pezizomycotina</taxon>
        <taxon>Eurotiomycetes</taxon>
        <taxon>Eurotiomycetidae</taxon>
        <taxon>Eurotiales</taxon>
        <taxon>Aspergillaceae</taxon>
        <taxon>Penicillium</taxon>
    </lineage>
</organism>
<feature type="chain" id="PRO_0000460670" description="Non-secreted LysM effector LysM19">
    <location>
        <begin position="1"/>
        <end position="1258"/>
    </location>
</feature>
<feature type="domain" description="LysM 1" evidence="1">
    <location>
        <begin position="1028"/>
        <end position="1073"/>
    </location>
</feature>
<feature type="domain" description="LysM 2" evidence="1">
    <location>
        <begin position="1179"/>
        <end position="1227"/>
    </location>
</feature>
<feature type="region of interest" description="Disordered" evidence="2">
    <location>
        <begin position="148"/>
        <end position="168"/>
    </location>
</feature>
<feature type="compositionally biased region" description="Basic and acidic residues" evidence="2">
    <location>
        <begin position="157"/>
        <end position="168"/>
    </location>
</feature>
<accession>A0A0A2JQ23</accession>
<reference key="1">
    <citation type="journal article" date="2015" name="Mol. Plant Microbe Interact.">
        <title>Genome, transcriptome, and functional analyses of Penicillium expansum provide new insights into secondary metabolism and pathogenicity.</title>
        <authorList>
            <person name="Ballester A.R."/>
            <person name="Marcet-Houben M."/>
            <person name="Levin E."/>
            <person name="Sela N."/>
            <person name="Selma-Lazaro C."/>
            <person name="Carmona L."/>
            <person name="Wisniewski M."/>
            <person name="Droby S."/>
            <person name="Gonzalez-Candelas L."/>
            <person name="Gabaldon T."/>
        </authorList>
    </citation>
    <scope>NUCLEOTIDE SEQUENCE [LARGE SCALE GENOMIC DNA]</scope>
    <source>
        <strain>MD-8</strain>
    </source>
</reference>
<reference key="2">
    <citation type="journal article" date="2020" name="Mol. Genet. Genomics">
        <title>Multiple transcriptomic analyses and characterization of pathogen-related core effectors and LysM family members reveal their differential roles in fungal growth and pathogenicity in Penicillium expansum.</title>
        <authorList>
            <person name="Chen D."/>
            <person name="Li G."/>
            <person name="Liu J."/>
            <person name="Wisniewski M."/>
            <person name="Droby S."/>
            <person name="Levin E."/>
            <person name="Huang S."/>
            <person name="Liu Y."/>
        </authorList>
    </citation>
    <scope>FUNCTION</scope>
    <scope>DISRUPTION PHENOTYPE</scope>
    <scope>DOMAIN</scope>
</reference>
<dbReference type="EMBL" id="JQFZ01000155">
    <property type="protein sequence ID" value="KGO56946.1"/>
    <property type="molecule type" value="Genomic_DNA"/>
</dbReference>
<dbReference type="RefSeq" id="XP_016598634.1">
    <property type="nucleotide sequence ID" value="XM_016737578.1"/>
</dbReference>
<dbReference type="SMR" id="A0A0A2JQ23"/>
<dbReference type="STRING" id="27334.A0A0A2JQ23"/>
<dbReference type="GeneID" id="27672997"/>
<dbReference type="VEuPathDB" id="FungiDB:PEXP_025740"/>
<dbReference type="HOGENOM" id="CLU_002540_4_1_1"/>
<dbReference type="Proteomes" id="UP000030143">
    <property type="component" value="Unassembled WGS sequence"/>
</dbReference>
<dbReference type="GO" id="GO:0008061">
    <property type="term" value="F:chitin binding"/>
    <property type="evidence" value="ECO:0007669"/>
    <property type="project" value="UniProtKB-KW"/>
</dbReference>
<dbReference type="GO" id="GO:0016829">
    <property type="term" value="F:lyase activity"/>
    <property type="evidence" value="ECO:0007669"/>
    <property type="project" value="UniProtKB-KW"/>
</dbReference>
<dbReference type="CDD" id="cd23668">
    <property type="entry name" value="GH55_beta13glucanase-like"/>
    <property type="match status" value="1"/>
</dbReference>
<dbReference type="Gene3D" id="3.10.350.10">
    <property type="entry name" value="LysM domain"/>
    <property type="match status" value="3"/>
</dbReference>
<dbReference type="Gene3D" id="2.160.20.10">
    <property type="entry name" value="Single-stranded right-handed beta-helix, Pectin lyase-like"/>
    <property type="match status" value="2"/>
</dbReference>
<dbReference type="InterPro" id="IPR052210">
    <property type="entry name" value="LysM1-like"/>
</dbReference>
<dbReference type="InterPro" id="IPR018392">
    <property type="entry name" value="LysM_dom"/>
</dbReference>
<dbReference type="InterPro" id="IPR036779">
    <property type="entry name" value="LysM_dom_sf"/>
</dbReference>
<dbReference type="InterPro" id="IPR012334">
    <property type="entry name" value="Pectin_lyas_fold"/>
</dbReference>
<dbReference type="InterPro" id="IPR011050">
    <property type="entry name" value="Pectin_lyase_fold/virulence"/>
</dbReference>
<dbReference type="InterPro" id="IPR024535">
    <property type="entry name" value="RHGA/B-epi-like_pectate_lyase"/>
</dbReference>
<dbReference type="PANTHER" id="PTHR34997">
    <property type="entry name" value="AM15"/>
    <property type="match status" value="1"/>
</dbReference>
<dbReference type="PANTHER" id="PTHR34997:SF16">
    <property type="entry name" value="LYSM DOMAIN-CONTAINING PROTEIN"/>
    <property type="match status" value="1"/>
</dbReference>
<dbReference type="Pfam" id="PF01476">
    <property type="entry name" value="LysM"/>
    <property type="match status" value="1"/>
</dbReference>
<dbReference type="Pfam" id="PF12708">
    <property type="entry name" value="Pect-lyase_RHGA_epim"/>
    <property type="match status" value="2"/>
</dbReference>
<dbReference type="SUPFAM" id="SSF51126">
    <property type="entry name" value="Pectin lyase-like"/>
    <property type="match status" value="2"/>
</dbReference>
<dbReference type="PROSITE" id="PS51782">
    <property type="entry name" value="LYSM"/>
    <property type="match status" value="2"/>
</dbReference>
<name>LYS19_PENEN</name>
<evidence type="ECO:0000255" key="1">
    <source>
        <dbReference type="PROSITE-ProRule" id="PRU01118"/>
    </source>
</evidence>
<evidence type="ECO:0000256" key="2">
    <source>
        <dbReference type="SAM" id="MobiDB-lite"/>
    </source>
</evidence>
<evidence type="ECO:0000269" key="3">
    <source>
    </source>
</evidence>
<evidence type="ECO:0000303" key="4">
    <source>
    </source>
</evidence>
<evidence type="ECO:0000305" key="5"/>
<evidence type="ECO:0000305" key="6">
    <source>
    </source>
</evidence>
<gene>
    <name evidence="4" type="primary">LysM19</name>
    <name type="ORF">PEX2_003000</name>
</gene>
<comment type="function">
    <text evidence="6">Non-secreted LysM effector that might be involved in manipulation of host defenses for successful infection.</text>
</comment>
<comment type="domain">
    <text evidence="6">The LysM (lysin motif) domains are small globular domains involved in binding chitin in eukaryotes. LysM1 contains one LysM domain.</text>
</comment>
<comment type="disruption phenotype">
    <text evidence="3">Leads to enhanced fungal virulence, with faster decaying on infected fruits.</text>
</comment>
<comment type="miscellaneous">
    <text evidence="5">In plants, chitin acts as a microbe-associated molecular pattern (MAMP) that is recognized by lysin motif (LysM)-containing plant cell surface-localized pattern recognition receptors (PRRs) that activate a plethora of downstream immune responses.</text>
</comment>
<comment type="similarity">
    <text evidence="5">Belongs to the secreted LysM effector family.</text>
</comment>